<sequence>MPRPISATIHTAALANNLSVVRRHAAQSKVWAIVKANAYGHGLARVFPGLRGTDGFGLLDLDEAVKLRELGWAGPILLLEGFFRSTDIDVIDRYSLTTAVHNDEQMRMLETARLSKPVNVQLKMNSGMNRLGYTPEKYRAAWERARACPGIGQITLMTHFSDADGERGVAEQMATFERGAQGIAGARSFANSAAVLWHPSAHFDWVRPGIMLYGASPSGRAADIADRGLKPTMTLASELIAVQTLAKGQAVGYGSMFVAEDTMRIGVVACGYADGYPRIAPEGTPVVVDGVRTRIVGRVSMDMLTVDLTPVPQAGVGARVELWGETLPIDDVAARCMTVGYELMCAVAPRVPVRAE</sequence>
<organism>
    <name type="scientific">Burkholderia mallei (strain ATCC 23344)</name>
    <dbReference type="NCBI Taxonomy" id="243160"/>
    <lineage>
        <taxon>Bacteria</taxon>
        <taxon>Pseudomonadati</taxon>
        <taxon>Pseudomonadota</taxon>
        <taxon>Betaproteobacteria</taxon>
        <taxon>Burkholderiales</taxon>
        <taxon>Burkholderiaceae</taxon>
        <taxon>Burkholderia</taxon>
        <taxon>pseudomallei group</taxon>
    </lineage>
</organism>
<accession>Q62JA4</accession>
<comment type="function">
    <text evidence="1">Catalyzes the interconversion of L-alanine and D-alanine. May also act on other amino acids.</text>
</comment>
<comment type="catalytic activity">
    <reaction evidence="1">
        <text>L-alanine = D-alanine</text>
        <dbReference type="Rhea" id="RHEA:20249"/>
        <dbReference type="ChEBI" id="CHEBI:57416"/>
        <dbReference type="ChEBI" id="CHEBI:57972"/>
        <dbReference type="EC" id="5.1.1.1"/>
    </reaction>
</comment>
<comment type="cofactor">
    <cofactor evidence="1">
        <name>pyridoxal 5'-phosphate</name>
        <dbReference type="ChEBI" id="CHEBI:597326"/>
    </cofactor>
</comment>
<comment type="pathway">
    <text evidence="1">Amino-acid biosynthesis; D-alanine biosynthesis; D-alanine from L-alanine: step 1/1.</text>
</comment>
<comment type="similarity">
    <text evidence="1">Belongs to the alanine racemase family.</text>
</comment>
<evidence type="ECO:0000255" key="1">
    <source>
        <dbReference type="HAMAP-Rule" id="MF_01201"/>
    </source>
</evidence>
<gene>
    <name type="primary">alr</name>
    <name type="ordered locus">BMA1575</name>
</gene>
<proteinExistence type="inferred from homology"/>
<name>ALR_BURMA</name>
<protein>
    <recommendedName>
        <fullName evidence="1">Alanine racemase</fullName>
        <ecNumber evidence="1">5.1.1.1</ecNumber>
    </recommendedName>
</protein>
<feature type="chain" id="PRO_1000065976" description="Alanine racemase">
    <location>
        <begin position="1"/>
        <end position="356"/>
    </location>
</feature>
<feature type="active site" description="Proton acceptor; specific for D-alanine" evidence="1">
    <location>
        <position position="35"/>
    </location>
</feature>
<feature type="active site" description="Proton acceptor; specific for L-alanine" evidence="1">
    <location>
        <position position="253"/>
    </location>
</feature>
<feature type="binding site" evidence="1">
    <location>
        <position position="130"/>
    </location>
    <ligand>
        <name>substrate</name>
    </ligand>
</feature>
<feature type="binding site" evidence="1">
    <location>
        <position position="301"/>
    </location>
    <ligand>
        <name>substrate</name>
    </ligand>
</feature>
<feature type="modified residue" description="N6-(pyridoxal phosphate)lysine" evidence="1">
    <location>
        <position position="35"/>
    </location>
</feature>
<keyword id="KW-0413">Isomerase</keyword>
<keyword id="KW-0663">Pyridoxal phosphate</keyword>
<keyword id="KW-1185">Reference proteome</keyword>
<dbReference type="EC" id="5.1.1.1" evidence="1"/>
<dbReference type="EMBL" id="CP000010">
    <property type="protein sequence ID" value="AAU47927.1"/>
    <property type="molecule type" value="Genomic_DNA"/>
</dbReference>
<dbReference type="RefSeq" id="WP_004191260.1">
    <property type="nucleotide sequence ID" value="NC_006348.1"/>
</dbReference>
<dbReference type="RefSeq" id="YP_103215.1">
    <property type="nucleotide sequence ID" value="NC_006348.1"/>
</dbReference>
<dbReference type="SMR" id="Q62JA4"/>
<dbReference type="GeneID" id="93060719"/>
<dbReference type="KEGG" id="bma:BMA1575"/>
<dbReference type="PATRIC" id="fig|243160.12.peg.1622"/>
<dbReference type="eggNOG" id="COG0787">
    <property type="taxonomic scope" value="Bacteria"/>
</dbReference>
<dbReference type="HOGENOM" id="CLU_028393_1_0_4"/>
<dbReference type="BRENDA" id="5.1.1.1">
    <property type="organism ID" value="1030"/>
</dbReference>
<dbReference type="UniPathway" id="UPA00042">
    <property type="reaction ID" value="UER00497"/>
</dbReference>
<dbReference type="Proteomes" id="UP000006693">
    <property type="component" value="Chromosome 1"/>
</dbReference>
<dbReference type="GO" id="GO:0005829">
    <property type="term" value="C:cytosol"/>
    <property type="evidence" value="ECO:0007669"/>
    <property type="project" value="TreeGrafter"/>
</dbReference>
<dbReference type="GO" id="GO:0008784">
    <property type="term" value="F:alanine racemase activity"/>
    <property type="evidence" value="ECO:0007669"/>
    <property type="project" value="UniProtKB-UniRule"/>
</dbReference>
<dbReference type="GO" id="GO:0030170">
    <property type="term" value="F:pyridoxal phosphate binding"/>
    <property type="evidence" value="ECO:0007669"/>
    <property type="project" value="UniProtKB-UniRule"/>
</dbReference>
<dbReference type="GO" id="GO:0030632">
    <property type="term" value="P:D-alanine biosynthetic process"/>
    <property type="evidence" value="ECO:0007669"/>
    <property type="project" value="UniProtKB-UniRule"/>
</dbReference>
<dbReference type="CDD" id="cd06827">
    <property type="entry name" value="PLPDE_III_AR_proteobact"/>
    <property type="match status" value="1"/>
</dbReference>
<dbReference type="FunFam" id="2.40.37.10:FF:000002">
    <property type="entry name" value="Alanine racemase"/>
    <property type="match status" value="1"/>
</dbReference>
<dbReference type="FunFam" id="3.20.20.10:FF:000002">
    <property type="entry name" value="Alanine racemase"/>
    <property type="match status" value="1"/>
</dbReference>
<dbReference type="Gene3D" id="3.20.20.10">
    <property type="entry name" value="Alanine racemase"/>
    <property type="match status" value="1"/>
</dbReference>
<dbReference type="Gene3D" id="2.40.37.10">
    <property type="entry name" value="Lyase, Ornithine Decarboxylase, Chain A, domain 1"/>
    <property type="match status" value="1"/>
</dbReference>
<dbReference type="HAMAP" id="MF_01201">
    <property type="entry name" value="Ala_racemase"/>
    <property type="match status" value="1"/>
</dbReference>
<dbReference type="InterPro" id="IPR000821">
    <property type="entry name" value="Ala_racemase"/>
</dbReference>
<dbReference type="InterPro" id="IPR009006">
    <property type="entry name" value="Ala_racemase/Decarboxylase_C"/>
</dbReference>
<dbReference type="InterPro" id="IPR011079">
    <property type="entry name" value="Ala_racemase_C"/>
</dbReference>
<dbReference type="InterPro" id="IPR001608">
    <property type="entry name" value="Ala_racemase_N"/>
</dbReference>
<dbReference type="InterPro" id="IPR020622">
    <property type="entry name" value="Ala_racemase_pyridoxalP-BS"/>
</dbReference>
<dbReference type="InterPro" id="IPR029066">
    <property type="entry name" value="PLP-binding_barrel"/>
</dbReference>
<dbReference type="NCBIfam" id="TIGR00492">
    <property type="entry name" value="alr"/>
    <property type="match status" value="1"/>
</dbReference>
<dbReference type="PANTHER" id="PTHR30511">
    <property type="entry name" value="ALANINE RACEMASE"/>
    <property type="match status" value="1"/>
</dbReference>
<dbReference type="PANTHER" id="PTHR30511:SF0">
    <property type="entry name" value="ALANINE RACEMASE, CATABOLIC-RELATED"/>
    <property type="match status" value="1"/>
</dbReference>
<dbReference type="Pfam" id="PF00842">
    <property type="entry name" value="Ala_racemase_C"/>
    <property type="match status" value="1"/>
</dbReference>
<dbReference type="Pfam" id="PF01168">
    <property type="entry name" value="Ala_racemase_N"/>
    <property type="match status" value="1"/>
</dbReference>
<dbReference type="PRINTS" id="PR00992">
    <property type="entry name" value="ALARACEMASE"/>
</dbReference>
<dbReference type="SMART" id="SM01005">
    <property type="entry name" value="Ala_racemase_C"/>
    <property type="match status" value="1"/>
</dbReference>
<dbReference type="SUPFAM" id="SSF50621">
    <property type="entry name" value="Alanine racemase C-terminal domain-like"/>
    <property type="match status" value="1"/>
</dbReference>
<dbReference type="SUPFAM" id="SSF51419">
    <property type="entry name" value="PLP-binding barrel"/>
    <property type="match status" value="1"/>
</dbReference>
<dbReference type="PROSITE" id="PS00395">
    <property type="entry name" value="ALANINE_RACEMASE"/>
    <property type="match status" value="1"/>
</dbReference>
<reference key="1">
    <citation type="journal article" date="2004" name="Proc. Natl. Acad. Sci. U.S.A.">
        <title>Structural flexibility in the Burkholderia mallei genome.</title>
        <authorList>
            <person name="Nierman W.C."/>
            <person name="DeShazer D."/>
            <person name="Kim H.S."/>
            <person name="Tettelin H."/>
            <person name="Nelson K.E."/>
            <person name="Feldblyum T.V."/>
            <person name="Ulrich R.L."/>
            <person name="Ronning C.M."/>
            <person name="Brinkac L.M."/>
            <person name="Daugherty S.C."/>
            <person name="Davidsen T.D."/>
            <person name="DeBoy R.T."/>
            <person name="Dimitrov G."/>
            <person name="Dodson R.J."/>
            <person name="Durkin A.S."/>
            <person name="Gwinn M.L."/>
            <person name="Haft D.H."/>
            <person name="Khouri H.M."/>
            <person name="Kolonay J.F."/>
            <person name="Madupu R."/>
            <person name="Mohammoud Y."/>
            <person name="Nelson W.C."/>
            <person name="Radune D."/>
            <person name="Romero C.M."/>
            <person name="Sarria S."/>
            <person name="Selengut J."/>
            <person name="Shamblin C."/>
            <person name="Sullivan S.A."/>
            <person name="White O."/>
            <person name="Yu Y."/>
            <person name="Zafar N."/>
            <person name="Zhou L."/>
            <person name="Fraser C.M."/>
        </authorList>
    </citation>
    <scope>NUCLEOTIDE SEQUENCE [LARGE SCALE GENOMIC DNA]</scope>
    <source>
        <strain>ATCC 23344</strain>
    </source>
</reference>